<organism>
    <name type="scientific">Streptococcus pneumoniae serotype 4 (strain ATCC BAA-334 / TIGR4)</name>
    <dbReference type="NCBI Taxonomy" id="170187"/>
    <lineage>
        <taxon>Bacteria</taxon>
        <taxon>Bacillati</taxon>
        <taxon>Bacillota</taxon>
        <taxon>Bacilli</taxon>
        <taxon>Lactobacillales</taxon>
        <taxon>Streptococcaceae</taxon>
        <taxon>Streptococcus</taxon>
    </lineage>
</organism>
<sequence length="262" mass="30293">MLDPIAIQLGPLAIRWYALCIVTGLILAVYLTMKEAPRKKIIPDDILDFILVAFPLAILGARLYYVIFRFDYYSQNLGEIFAIWNGGLAIYGGLITGALVLYIFADRKLINTWDFLDIAAPSVMIAQSLGRWGNFFNQEAYGATVDNLDYLPGFIRDQMYIEGSYRQPTFLYESLWNLLGFALILIFRRKWKSLRRGHITAFYLIWYGFGRMVIEGMRTDSLMFFGFRVSQWLSVVLIGLGIMIVIYQNRKKAPYYITEEEN</sequence>
<protein>
    <recommendedName>
        <fullName evidence="1">Phosphatidylglycerol--prolipoprotein diacylglyceryl transferase</fullName>
        <ecNumber evidence="1">2.5.1.145</ecNumber>
    </recommendedName>
</protein>
<dbReference type="EC" id="2.5.1.145" evidence="1"/>
<dbReference type="EMBL" id="AE005672">
    <property type="protein sequence ID" value="AAK75510.1"/>
    <property type="molecule type" value="Genomic_DNA"/>
</dbReference>
<dbReference type="PIR" id="E95164">
    <property type="entry name" value="E95164"/>
</dbReference>
<dbReference type="RefSeq" id="WP_000886660.1">
    <property type="nucleotide sequence ID" value="NZ_CP155539.1"/>
</dbReference>
<dbReference type="SMR" id="Q97Q19"/>
<dbReference type="PaxDb" id="170187-SP_1412"/>
<dbReference type="EnsemblBacteria" id="AAK75510">
    <property type="protein sequence ID" value="AAK75510"/>
    <property type="gene ID" value="SP_1412"/>
</dbReference>
<dbReference type="KEGG" id="spn:SP_1412"/>
<dbReference type="eggNOG" id="COG0682">
    <property type="taxonomic scope" value="Bacteria"/>
</dbReference>
<dbReference type="PhylomeDB" id="Q97Q19"/>
<dbReference type="BioCyc" id="SPNE170187:G1FZB-1420-MONOMER"/>
<dbReference type="UniPathway" id="UPA00664"/>
<dbReference type="Proteomes" id="UP000000585">
    <property type="component" value="Chromosome"/>
</dbReference>
<dbReference type="GO" id="GO:0005886">
    <property type="term" value="C:plasma membrane"/>
    <property type="evidence" value="ECO:0007669"/>
    <property type="project" value="UniProtKB-SubCell"/>
</dbReference>
<dbReference type="GO" id="GO:0008961">
    <property type="term" value="F:phosphatidylglycerol-prolipoprotein diacylglyceryl transferase activity"/>
    <property type="evidence" value="ECO:0007669"/>
    <property type="project" value="UniProtKB-UniRule"/>
</dbReference>
<dbReference type="GO" id="GO:0042158">
    <property type="term" value="P:lipoprotein biosynthetic process"/>
    <property type="evidence" value="ECO:0007669"/>
    <property type="project" value="UniProtKB-UniRule"/>
</dbReference>
<dbReference type="HAMAP" id="MF_01147">
    <property type="entry name" value="Lgt"/>
    <property type="match status" value="1"/>
</dbReference>
<dbReference type="InterPro" id="IPR001640">
    <property type="entry name" value="Lgt"/>
</dbReference>
<dbReference type="NCBIfam" id="TIGR00544">
    <property type="entry name" value="lgt"/>
    <property type="match status" value="1"/>
</dbReference>
<dbReference type="PANTHER" id="PTHR30589:SF0">
    <property type="entry name" value="PHOSPHATIDYLGLYCEROL--PROLIPOPROTEIN DIACYLGLYCERYL TRANSFERASE"/>
    <property type="match status" value="1"/>
</dbReference>
<dbReference type="PANTHER" id="PTHR30589">
    <property type="entry name" value="PROLIPOPROTEIN DIACYLGLYCERYL TRANSFERASE"/>
    <property type="match status" value="1"/>
</dbReference>
<dbReference type="Pfam" id="PF01790">
    <property type="entry name" value="LGT"/>
    <property type="match status" value="1"/>
</dbReference>
<dbReference type="PROSITE" id="PS01311">
    <property type="entry name" value="LGT"/>
    <property type="match status" value="1"/>
</dbReference>
<name>LGT_STRPN</name>
<comment type="function">
    <text evidence="1">Catalyzes the transfer of the diacylglyceryl group from phosphatidylglycerol to the sulfhydryl group of the N-terminal cysteine of a prolipoprotein, the first step in the formation of mature lipoproteins.</text>
</comment>
<comment type="catalytic activity">
    <reaction evidence="1">
        <text>L-cysteinyl-[prolipoprotein] + a 1,2-diacyl-sn-glycero-3-phospho-(1'-sn-glycerol) = an S-1,2-diacyl-sn-glyceryl-L-cysteinyl-[prolipoprotein] + sn-glycerol 1-phosphate + H(+)</text>
        <dbReference type="Rhea" id="RHEA:56712"/>
        <dbReference type="Rhea" id="RHEA-COMP:14679"/>
        <dbReference type="Rhea" id="RHEA-COMP:14680"/>
        <dbReference type="ChEBI" id="CHEBI:15378"/>
        <dbReference type="ChEBI" id="CHEBI:29950"/>
        <dbReference type="ChEBI" id="CHEBI:57685"/>
        <dbReference type="ChEBI" id="CHEBI:64716"/>
        <dbReference type="ChEBI" id="CHEBI:140658"/>
        <dbReference type="EC" id="2.5.1.145"/>
    </reaction>
</comment>
<comment type="pathway">
    <text evidence="1">Protein modification; lipoprotein biosynthesis (diacylglyceryl transfer).</text>
</comment>
<comment type="subcellular location">
    <subcellularLocation>
        <location evidence="1">Cell membrane</location>
        <topology evidence="1">Multi-pass membrane protein</topology>
    </subcellularLocation>
</comment>
<comment type="similarity">
    <text evidence="1">Belongs to the Lgt family.</text>
</comment>
<reference key="1">
    <citation type="journal article" date="2001" name="Science">
        <title>Complete genome sequence of a virulent isolate of Streptococcus pneumoniae.</title>
        <authorList>
            <person name="Tettelin H."/>
            <person name="Nelson K.E."/>
            <person name="Paulsen I.T."/>
            <person name="Eisen J.A."/>
            <person name="Read T.D."/>
            <person name="Peterson S.N."/>
            <person name="Heidelberg J.F."/>
            <person name="DeBoy R.T."/>
            <person name="Haft D.H."/>
            <person name="Dodson R.J."/>
            <person name="Durkin A.S."/>
            <person name="Gwinn M.L."/>
            <person name="Kolonay J.F."/>
            <person name="Nelson W.C."/>
            <person name="Peterson J.D."/>
            <person name="Umayam L.A."/>
            <person name="White O."/>
            <person name="Salzberg S.L."/>
            <person name="Lewis M.R."/>
            <person name="Radune D."/>
            <person name="Holtzapple E.K."/>
            <person name="Khouri H.M."/>
            <person name="Wolf A.M."/>
            <person name="Utterback T.R."/>
            <person name="Hansen C.L."/>
            <person name="McDonald L.A."/>
            <person name="Feldblyum T.V."/>
            <person name="Angiuoli S.V."/>
            <person name="Dickinson T."/>
            <person name="Hickey E.K."/>
            <person name="Holt I.E."/>
            <person name="Loftus B.J."/>
            <person name="Yang F."/>
            <person name="Smith H.O."/>
            <person name="Venter J.C."/>
            <person name="Dougherty B.A."/>
            <person name="Morrison D.A."/>
            <person name="Hollingshead S.K."/>
            <person name="Fraser C.M."/>
        </authorList>
    </citation>
    <scope>NUCLEOTIDE SEQUENCE [LARGE SCALE GENOMIC DNA]</scope>
    <source>
        <strain>ATCC BAA-334 / TIGR4</strain>
    </source>
</reference>
<keyword id="KW-1003">Cell membrane</keyword>
<keyword id="KW-0472">Membrane</keyword>
<keyword id="KW-1185">Reference proteome</keyword>
<keyword id="KW-0808">Transferase</keyword>
<keyword id="KW-0812">Transmembrane</keyword>
<keyword id="KW-1133">Transmembrane helix</keyword>
<accession>Q97Q19</accession>
<evidence type="ECO:0000255" key="1">
    <source>
        <dbReference type="HAMAP-Rule" id="MF_01147"/>
    </source>
</evidence>
<proteinExistence type="inferred from homology"/>
<gene>
    <name evidence="1" type="primary">lgt</name>
    <name type="ordered locus">SP_1412</name>
</gene>
<feature type="chain" id="PRO_0000172688" description="Phosphatidylglycerol--prolipoprotein diacylglyceryl transferase">
    <location>
        <begin position="1"/>
        <end position="262"/>
    </location>
</feature>
<feature type="transmembrane region" description="Helical" evidence="1">
    <location>
        <begin position="9"/>
        <end position="29"/>
    </location>
</feature>
<feature type="transmembrane region" description="Helical" evidence="1">
    <location>
        <begin position="41"/>
        <end position="61"/>
    </location>
</feature>
<feature type="transmembrane region" description="Helical" evidence="1">
    <location>
        <begin position="80"/>
        <end position="100"/>
    </location>
</feature>
<feature type="transmembrane region" description="Helical" evidence="1">
    <location>
        <begin position="109"/>
        <end position="129"/>
    </location>
</feature>
<feature type="transmembrane region" description="Helical" evidence="1">
    <location>
        <begin position="167"/>
        <end position="187"/>
    </location>
</feature>
<feature type="transmembrane region" description="Helical" evidence="1">
    <location>
        <begin position="197"/>
        <end position="217"/>
    </location>
</feature>
<feature type="transmembrane region" description="Helical" evidence="1">
    <location>
        <begin position="226"/>
        <end position="246"/>
    </location>
</feature>
<feature type="binding site" evidence="1">
    <location>
        <position position="131"/>
    </location>
    <ligand>
        <name>a 1,2-diacyl-sn-glycero-3-phospho-(1'-sn-glycerol)</name>
        <dbReference type="ChEBI" id="CHEBI:64716"/>
    </ligand>
</feature>